<protein>
    <recommendedName>
        <fullName evidence="1">Urease accessory protein UreG</fullName>
    </recommendedName>
</protein>
<feature type="chain" id="PRO_1000145228" description="Urease accessory protein UreG">
    <location>
        <begin position="1"/>
        <end position="204"/>
    </location>
</feature>
<feature type="binding site" evidence="1">
    <location>
        <begin position="11"/>
        <end position="18"/>
    </location>
    <ligand>
        <name>GTP</name>
        <dbReference type="ChEBI" id="CHEBI:37565"/>
    </ligand>
</feature>
<evidence type="ECO:0000255" key="1">
    <source>
        <dbReference type="HAMAP-Rule" id="MF_01389"/>
    </source>
</evidence>
<sequence>MANPIKIGIGGPVGAGKTQLIEKVVKRLSKEMSIGVITNDIYTKEDEKILVNSGVLPESRIIGVETGGCPHTAIREDASMNFAAIDELLERHDDIELIFIESGGDNLAATFSPELVDFSIYIIDVAQGEKIPRKGGQGMIKSDFFVINKTDLAPYVGASLEQMAEDTKVFRGKRPFTFTNLKTDEGLDEVIDWIERDTLLKGLS</sequence>
<proteinExistence type="inferred from homology"/>
<name>UREG_STAAC</name>
<comment type="function">
    <text evidence="1">Facilitates the functional incorporation of the urease nickel metallocenter. This process requires GTP hydrolysis, probably effectuated by UreG.</text>
</comment>
<comment type="subunit">
    <text evidence="1">Homodimer. UreD, UreF and UreG form a complex that acts as a GTP-hydrolysis-dependent molecular chaperone, activating the urease apoprotein by helping to assemble the nickel containing metallocenter of UreC. The UreE protein probably delivers the nickel.</text>
</comment>
<comment type="subcellular location">
    <subcellularLocation>
        <location evidence="1">Cytoplasm</location>
    </subcellularLocation>
</comment>
<comment type="similarity">
    <text evidence="1">Belongs to the SIMIBI class G3E GTPase family. UreG subfamily.</text>
</comment>
<accession>Q5HDR5</accession>
<gene>
    <name evidence="1" type="primary">ureG</name>
    <name type="ordered locus">SACOL2285</name>
</gene>
<dbReference type="EMBL" id="CP000046">
    <property type="protein sequence ID" value="AAW38505.1"/>
    <property type="molecule type" value="Genomic_DNA"/>
</dbReference>
<dbReference type="RefSeq" id="WP_000002973.1">
    <property type="nucleotide sequence ID" value="NZ_JBGOFO010000004.1"/>
</dbReference>
<dbReference type="SMR" id="Q5HDR5"/>
<dbReference type="KEGG" id="sac:SACOL2285"/>
<dbReference type="HOGENOM" id="CLU_072144_1_0_9"/>
<dbReference type="Proteomes" id="UP000000530">
    <property type="component" value="Chromosome"/>
</dbReference>
<dbReference type="GO" id="GO:0005737">
    <property type="term" value="C:cytoplasm"/>
    <property type="evidence" value="ECO:0007669"/>
    <property type="project" value="UniProtKB-SubCell"/>
</dbReference>
<dbReference type="GO" id="GO:0005525">
    <property type="term" value="F:GTP binding"/>
    <property type="evidence" value="ECO:0007669"/>
    <property type="project" value="UniProtKB-KW"/>
</dbReference>
<dbReference type="GO" id="GO:0003924">
    <property type="term" value="F:GTPase activity"/>
    <property type="evidence" value="ECO:0007669"/>
    <property type="project" value="InterPro"/>
</dbReference>
<dbReference type="GO" id="GO:0016151">
    <property type="term" value="F:nickel cation binding"/>
    <property type="evidence" value="ECO:0007669"/>
    <property type="project" value="UniProtKB-UniRule"/>
</dbReference>
<dbReference type="GO" id="GO:0043419">
    <property type="term" value="P:urea catabolic process"/>
    <property type="evidence" value="ECO:0007669"/>
    <property type="project" value="InterPro"/>
</dbReference>
<dbReference type="CDD" id="cd05540">
    <property type="entry name" value="UreG"/>
    <property type="match status" value="1"/>
</dbReference>
<dbReference type="Gene3D" id="3.40.50.300">
    <property type="entry name" value="P-loop containing nucleotide triphosphate hydrolases"/>
    <property type="match status" value="1"/>
</dbReference>
<dbReference type="HAMAP" id="MF_01389">
    <property type="entry name" value="UreG"/>
    <property type="match status" value="1"/>
</dbReference>
<dbReference type="InterPro" id="IPR003495">
    <property type="entry name" value="CobW/HypB/UreG_nucleotide-bd"/>
</dbReference>
<dbReference type="InterPro" id="IPR027417">
    <property type="entry name" value="P-loop_NTPase"/>
</dbReference>
<dbReference type="InterPro" id="IPR004400">
    <property type="entry name" value="UreG"/>
</dbReference>
<dbReference type="NCBIfam" id="TIGR00101">
    <property type="entry name" value="ureG"/>
    <property type="match status" value="1"/>
</dbReference>
<dbReference type="PANTHER" id="PTHR31715">
    <property type="entry name" value="UREASE ACCESSORY PROTEIN G"/>
    <property type="match status" value="1"/>
</dbReference>
<dbReference type="PANTHER" id="PTHR31715:SF0">
    <property type="entry name" value="UREASE ACCESSORY PROTEIN G"/>
    <property type="match status" value="1"/>
</dbReference>
<dbReference type="Pfam" id="PF02492">
    <property type="entry name" value="cobW"/>
    <property type="match status" value="1"/>
</dbReference>
<dbReference type="PIRSF" id="PIRSF005624">
    <property type="entry name" value="Ni-bind_GTPase"/>
    <property type="match status" value="1"/>
</dbReference>
<dbReference type="SUPFAM" id="SSF52540">
    <property type="entry name" value="P-loop containing nucleoside triphosphate hydrolases"/>
    <property type="match status" value="1"/>
</dbReference>
<keyword id="KW-0143">Chaperone</keyword>
<keyword id="KW-0963">Cytoplasm</keyword>
<keyword id="KW-0342">GTP-binding</keyword>
<keyword id="KW-0996">Nickel insertion</keyword>
<keyword id="KW-0547">Nucleotide-binding</keyword>
<reference key="1">
    <citation type="journal article" date="2005" name="J. Bacteriol.">
        <title>Insights on evolution of virulence and resistance from the complete genome analysis of an early methicillin-resistant Staphylococcus aureus strain and a biofilm-producing methicillin-resistant Staphylococcus epidermidis strain.</title>
        <authorList>
            <person name="Gill S.R."/>
            <person name="Fouts D.E."/>
            <person name="Archer G.L."/>
            <person name="Mongodin E.F."/>
            <person name="DeBoy R.T."/>
            <person name="Ravel J."/>
            <person name="Paulsen I.T."/>
            <person name="Kolonay J.F."/>
            <person name="Brinkac L.M."/>
            <person name="Beanan M.J."/>
            <person name="Dodson R.J."/>
            <person name="Daugherty S.C."/>
            <person name="Madupu R."/>
            <person name="Angiuoli S.V."/>
            <person name="Durkin A.S."/>
            <person name="Haft D.H."/>
            <person name="Vamathevan J.J."/>
            <person name="Khouri H."/>
            <person name="Utterback T.R."/>
            <person name="Lee C."/>
            <person name="Dimitrov G."/>
            <person name="Jiang L."/>
            <person name="Qin H."/>
            <person name="Weidman J."/>
            <person name="Tran K."/>
            <person name="Kang K.H."/>
            <person name="Hance I.R."/>
            <person name="Nelson K.E."/>
            <person name="Fraser C.M."/>
        </authorList>
    </citation>
    <scope>NUCLEOTIDE SEQUENCE [LARGE SCALE GENOMIC DNA]</scope>
    <source>
        <strain>COL</strain>
    </source>
</reference>
<organism>
    <name type="scientific">Staphylococcus aureus (strain COL)</name>
    <dbReference type="NCBI Taxonomy" id="93062"/>
    <lineage>
        <taxon>Bacteria</taxon>
        <taxon>Bacillati</taxon>
        <taxon>Bacillota</taxon>
        <taxon>Bacilli</taxon>
        <taxon>Bacillales</taxon>
        <taxon>Staphylococcaceae</taxon>
        <taxon>Staphylococcus</taxon>
    </lineage>
</organism>